<comment type="function">
    <text evidence="3">Catalyzes the transfer of a geranylgeranyl moiety from geranylgeranyl diphosphate to both cysteines of Rab proteins with the C-terminal sequence -XXCC, -XCXC and -CCXX, such as RAB1A, RAB3A, RAB5A and RAB7A.</text>
</comment>
<comment type="catalytic activity">
    <reaction>
        <text>geranylgeranyl diphosphate + L-cysteinyl-[protein] = S-geranylgeranyl-L-cysteinyl-[protein] + diphosphate</text>
        <dbReference type="Rhea" id="RHEA:21240"/>
        <dbReference type="Rhea" id="RHEA-COMP:10131"/>
        <dbReference type="Rhea" id="RHEA-COMP:11537"/>
        <dbReference type="ChEBI" id="CHEBI:29950"/>
        <dbReference type="ChEBI" id="CHEBI:33019"/>
        <dbReference type="ChEBI" id="CHEBI:57533"/>
        <dbReference type="ChEBI" id="CHEBI:86021"/>
        <dbReference type="EC" id="2.5.1.60"/>
    </reaction>
</comment>
<comment type="activity regulation">
    <text evidence="1">The enzymatic reaction requires the aid of a Rab escort protein (also called component A), such as CHM.</text>
</comment>
<comment type="subunit">
    <text evidence="2">Heterotrimer composed of RABGGTA, RABGGTB and CHM; within this trimer, RABGGTA and RABGGTB form the catalytic component B, while CHM (component A) mediates peptide substrate binding. The Rab GGTase dimer (RGGT) interacts with CHM (component A) prior to Rab protein binding; the association is stabilized by geranylgeranyl pyrophosphate (GGpp). The CHM:RGGT:Rab complex is destabilized by GGpp. Interacts with non-phosphorylated form of RAB8A; phosphorylation of RAB8A at 'Thr-72' disrupts this interaction.</text>
</comment>
<comment type="alternative products">
    <event type="alternative splicing"/>
    <isoform>
        <id>Q9JHK4-1</id>
        <name>1</name>
        <sequence type="displayed"/>
    </isoform>
    <isoform>
        <id>Q9JHK4-2</id>
        <name>2</name>
        <sequence type="described" ref="VSP_009113 VSP_009114"/>
    </isoform>
</comment>
<comment type="disease">
    <text evidence="3">Defects in Rabggta are the cause of the gunmetal (gm) phenotype. Mice homozygous for gm have prolonged bleeding, thrombocytopenia and reduced platelet alpha- and delta-granule contents.</text>
</comment>
<comment type="similarity">
    <text evidence="5">Belongs to the protein prenyltransferase subunit alpha family.</text>
</comment>
<feature type="chain" id="PRO_0000119758" description="Geranylgeranyl transferase type-2 subunit alpha">
    <location>
        <begin position="1"/>
        <end position="567"/>
    </location>
</feature>
<feature type="repeat" description="PFTA 1">
    <location>
        <begin position="44"/>
        <end position="78"/>
    </location>
</feature>
<feature type="repeat" description="PFTA 2">
    <location>
        <begin position="88"/>
        <end position="122"/>
    </location>
</feature>
<feature type="repeat" description="PFTA 3">
    <location>
        <begin position="124"/>
        <end position="158"/>
    </location>
</feature>
<feature type="repeat" description="PFTA 4">
    <location>
        <begin position="159"/>
        <end position="193"/>
    </location>
</feature>
<feature type="repeat" description="PFTA 5">
    <location>
        <begin position="207"/>
        <end position="241"/>
    </location>
</feature>
<feature type="repeat" description="PFTA 6">
    <location>
        <begin position="363"/>
        <end position="397"/>
    </location>
</feature>
<feature type="repeat" description="LRR 1">
    <location>
        <begin position="442"/>
        <end position="463"/>
    </location>
</feature>
<feature type="repeat" description="LRR 2">
    <location>
        <begin position="464"/>
        <end position="486"/>
    </location>
</feature>
<feature type="repeat" description="LRR 3">
    <location>
        <begin position="487"/>
        <end position="508"/>
    </location>
</feature>
<feature type="repeat" description="LRR 4">
    <location>
        <begin position="509"/>
        <end position="530"/>
    </location>
</feature>
<feature type="repeat" description="LRR 5">
    <location>
        <begin position="534"/>
        <end position="555"/>
    </location>
</feature>
<feature type="modified residue" description="Phosphoserine" evidence="6">
    <location>
        <position position="98"/>
    </location>
</feature>
<feature type="splice variant" id="VSP_009113" description="In isoform 2." evidence="4">
    <original>HQE</original>
    <variation>DAV</variation>
    <location>
        <begin position="337"/>
        <end position="339"/>
    </location>
</feature>
<feature type="splice variant" id="VSP_009114" description="In isoform 2." evidence="4">
    <location>
        <begin position="340"/>
        <end position="567"/>
    </location>
</feature>
<gene>
    <name type="primary">Rabggta</name>
</gene>
<accession>Q9JHK4</accession>
<accession>Q9JLX2</accession>
<name>PGTA_MOUSE</name>
<reference key="1">
    <citation type="journal article" date="2000" name="Proc. Natl. Acad. Sci. U.S.A.">
        <title>Rab geranylgeranyl transferase alpha mutation in the gunmetal mouse reduces Rab prenylation and platelet synthesis.</title>
        <authorList>
            <person name="Detter J.C."/>
            <person name="Zhang Q."/>
            <person name="Mules E.H."/>
            <person name="Novack E.K."/>
            <person name="Mishra V.S."/>
            <person name="Li W."/>
            <person name="McMurtrie E.B."/>
            <person name="Tchernev V.T."/>
            <person name="Wallace M.R."/>
            <person name="Seabra M.C."/>
            <person name="Swank R.T."/>
            <person name="Kingsmore S.K."/>
        </authorList>
    </citation>
    <scope>NUCLEOTIDE SEQUENCE [GENOMIC DNA / MRNA] (ISOFORMS 1 AND 2)</scope>
    <scope>DISEASE</scope>
    <scope>FUNCTION</scope>
    <source>
        <strain>C57BL/6J</strain>
        <strain>C57BL/6J-GM/GM</strain>
    </source>
</reference>
<reference key="2">
    <citation type="journal article" date="2005" name="Science">
        <title>The transcriptional landscape of the mammalian genome.</title>
        <authorList>
            <person name="Carninci P."/>
            <person name="Kasukawa T."/>
            <person name="Katayama S."/>
            <person name="Gough J."/>
            <person name="Frith M.C."/>
            <person name="Maeda N."/>
            <person name="Oyama R."/>
            <person name="Ravasi T."/>
            <person name="Lenhard B."/>
            <person name="Wells C."/>
            <person name="Kodzius R."/>
            <person name="Shimokawa K."/>
            <person name="Bajic V.B."/>
            <person name="Brenner S.E."/>
            <person name="Batalov S."/>
            <person name="Forrest A.R."/>
            <person name="Zavolan M."/>
            <person name="Davis M.J."/>
            <person name="Wilming L.G."/>
            <person name="Aidinis V."/>
            <person name="Allen J.E."/>
            <person name="Ambesi-Impiombato A."/>
            <person name="Apweiler R."/>
            <person name="Aturaliya R.N."/>
            <person name="Bailey T.L."/>
            <person name="Bansal M."/>
            <person name="Baxter L."/>
            <person name="Beisel K.W."/>
            <person name="Bersano T."/>
            <person name="Bono H."/>
            <person name="Chalk A.M."/>
            <person name="Chiu K.P."/>
            <person name="Choudhary V."/>
            <person name="Christoffels A."/>
            <person name="Clutterbuck D.R."/>
            <person name="Crowe M.L."/>
            <person name="Dalla E."/>
            <person name="Dalrymple B.P."/>
            <person name="de Bono B."/>
            <person name="Della Gatta G."/>
            <person name="di Bernardo D."/>
            <person name="Down T."/>
            <person name="Engstrom P."/>
            <person name="Fagiolini M."/>
            <person name="Faulkner G."/>
            <person name="Fletcher C.F."/>
            <person name="Fukushima T."/>
            <person name="Furuno M."/>
            <person name="Futaki S."/>
            <person name="Gariboldi M."/>
            <person name="Georgii-Hemming P."/>
            <person name="Gingeras T.R."/>
            <person name="Gojobori T."/>
            <person name="Green R.E."/>
            <person name="Gustincich S."/>
            <person name="Harbers M."/>
            <person name="Hayashi Y."/>
            <person name="Hensch T.K."/>
            <person name="Hirokawa N."/>
            <person name="Hill D."/>
            <person name="Huminiecki L."/>
            <person name="Iacono M."/>
            <person name="Ikeo K."/>
            <person name="Iwama A."/>
            <person name="Ishikawa T."/>
            <person name="Jakt M."/>
            <person name="Kanapin A."/>
            <person name="Katoh M."/>
            <person name="Kawasawa Y."/>
            <person name="Kelso J."/>
            <person name="Kitamura H."/>
            <person name="Kitano H."/>
            <person name="Kollias G."/>
            <person name="Krishnan S.P."/>
            <person name="Kruger A."/>
            <person name="Kummerfeld S.K."/>
            <person name="Kurochkin I.V."/>
            <person name="Lareau L.F."/>
            <person name="Lazarevic D."/>
            <person name="Lipovich L."/>
            <person name="Liu J."/>
            <person name="Liuni S."/>
            <person name="McWilliam S."/>
            <person name="Madan Babu M."/>
            <person name="Madera M."/>
            <person name="Marchionni L."/>
            <person name="Matsuda H."/>
            <person name="Matsuzawa S."/>
            <person name="Miki H."/>
            <person name="Mignone F."/>
            <person name="Miyake S."/>
            <person name="Morris K."/>
            <person name="Mottagui-Tabar S."/>
            <person name="Mulder N."/>
            <person name="Nakano N."/>
            <person name="Nakauchi H."/>
            <person name="Ng P."/>
            <person name="Nilsson R."/>
            <person name="Nishiguchi S."/>
            <person name="Nishikawa S."/>
            <person name="Nori F."/>
            <person name="Ohara O."/>
            <person name="Okazaki Y."/>
            <person name="Orlando V."/>
            <person name="Pang K.C."/>
            <person name="Pavan W.J."/>
            <person name="Pavesi G."/>
            <person name="Pesole G."/>
            <person name="Petrovsky N."/>
            <person name="Piazza S."/>
            <person name="Reed J."/>
            <person name="Reid J.F."/>
            <person name="Ring B.Z."/>
            <person name="Ringwald M."/>
            <person name="Rost B."/>
            <person name="Ruan Y."/>
            <person name="Salzberg S.L."/>
            <person name="Sandelin A."/>
            <person name="Schneider C."/>
            <person name="Schoenbach C."/>
            <person name="Sekiguchi K."/>
            <person name="Semple C.A."/>
            <person name="Seno S."/>
            <person name="Sessa L."/>
            <person name="Sheng Y."/>
            <person name="Shibata Y."/>
            <person name="Shimada H."/>
            <person name="Shimada K."/>
            <person name="Silva D."/>
            <person name="Sinclair B."/>
            <person name="Sperling S."/>
            <person name="Stupka E."/>
            <person name="Sugiura K."/>
            <person name="Sultana R."/>
            <person name="Takenaka Y."/>
            <person name="Taki K."/>
            <person name="Tammoja K."/>
            <person name="Tan S.L."/>
            <person name="Tang S."/>
            <person name="Taylor M.S."/>
            <person name="Tegner J."/>
            <person name="Teichmann S.A."/>
            <person name="Ueda H.R."/>
            <person name="van Nimwegen E."/>
            <person name="Verardo R."/>
            <person name="Wei C.L."/>
            <person name="Yagi K."/>
            <person name="Yamanishi H."/>
            <person name="Zabarovsky E."/>
            <person name="Zhu S."/>
            <person name="Zimmer A."/>
            <person name="Hide W."/>
            <person name="Bult C."/>
            <person name="Grimmond S.M."/>
            <person name="Teasdale R.D."/>
            <person name="Liu E.T."/>
            <person name="Brusic V."/>
            <person name="Quackenbush J."/>
            <person name="Wahlestedt C."/>
            <person name="Mattick J.S."/>
            <person name="Hume D.A."/>
            <person name="Kai C."/>
            <person name="Sasaki D."/>
            <person name="Tomaru Y."/>
            <person name="Fukuda S."/>
            <person name="Kanamori-Katayama M."/>
            <person name="Suzuki M."/>
            <person name="Aoki J."/>
            <person name="Arakawa T."/>
            <person name="Iida J."/>
            <person name="Imamura K."/>
            <person name="Itoh M."/>
            <person name="Kato T."/>
            <person name="Kawaji H."/>
            <person name="Kawagashira N."/>
            <person name="Kawashima T."/>
            <person name="Kojima M."/>
            <person name="Kondo S."/>
            <person name="Konno H."/>
            <person name="Nakano K."/>
            <person name="Ninomiya N."/>
            <person name="Nishio T."/>
            <person name="Okada M."/>
            <person name="Plessy C."/>
            <person name="Shibata K."/>
            <person name="Shiraki T."/>
            <person name="Suzuki S."/>
            <person name="Tagami M."/>
            <person name="Waki K."/>
            <person name="Watahiki A."/>
            <person name="Okamura-Oho Y."/>
            <person name="Suzuki H."/>
            <person name="Kawai J."/>
            <person name="Hayashizaki Y."/>
        </authorList>
    </citation>
    <scope>NUCLEOTIDE SEQUENCE [LARGE SCALE MRNA] (ISOFORM 1)</scope>
    <source>
        <strain>C57BL/6J</strain>
        <tissue>Kidney</tissue>
    </source>
</reference>
<reference key="3">
    <citation type="journal article" date="2010" name="Cell">
        <title>A tissue-specific atlas of mouse protein phosphorylation and expression.</title>
        <authorList>
            <person name="Huttlin E.L."/>
            <person name="Jedrychowski M.P."/>
            <person name="Elias J.E."/>
            <person name="Goswami T."/>
            <person name="Rad R."/>
            <person name="Beausoleil S.A."/>
            <person name="Villen J."/>
            <person name="Haas W."/>
            <person name="Sowa M.E."/>
            <person name="Gygi S.P."/>
        </authorList>
    </citation>
    <scope>PHOSPHORYLATION [LARGE SCALE ANALYSIS] AT SER-98</scope>
    <scope>IDENTIFICATION BY MASS SPECTROMETRY [LARGE SCALE ANALYSIS]</scope>
    <source>
        <tissue>Brain</tissue>
        <tissue>Brown adipose tissue</tissue>
        <tissue>Heart</tissue>
        <tissue>Kidney</tissue>
        <tissue>Liver</tissue>
        <tissue>Lung</tissue>
        <tissue>Pancreas</tissue>
        <tissue>Spleen</tissue>
        <tissue>Testis</tissue>
    </source>
</reference>
<protein>
    <recommendedName>
        <fullName>Geranylgeranyl transferase type-2 subunit alpha</fullName>
        <ecNumber>2.5.1.60</ecNumber>
    </recommendedName>
    <alternativeName>
        <fullName>Geranylgeranyl transferase type II subunit alpha</fullName>
    </alternativeName>
    <alternativeName>
        <fullName>Rab geranyl-geranyltransferase subunit alpha</fullName>
        <shortName>Rab GG transferase alpha</shortName>
        <shortName>Rab GGTase alpha</shortName>
    </alternativeName>
    <alternativeName>
        <fullName>Rab geranylgeranyltransferase subunit alpha</fullName>
    </alternativeName>
</protein>
<evidence type="ECO:0000250" key="1"/>
<evidence type="ECO:0000250" key="2">
    <source>
        <dbReference type="UniProtKB" id="Q92696"/>
    </source>
</evidence>
<evidence type="ECO:0000269" key="3">
    <source>
    </source>
</evidence>
<evidence type="ECO:0000303" key="4">
    <source>
    </source>
</evidence>
<evidence type="ECO:0000305" key="5"/>
<evidence type="ECO:0007744" key="6">
    <source>
    </source>
</evidence>
<dbReference type="EC" id="2.5.1.60"/>
<dbReference type="EMBL" id="AF127654">
    <property type="protein sequence ID" value="AAF65918.1"/>
    <property type="molecule type" value="Genomic_DNA"/>
</dbReference>
<dbReference type="EMBL" id="AF127655">
    <property type="protein sequence ID" value="AAF65919.1"/>
    <property type="molecule type" value="Genomic_DNA"/>
</dbReference>
<dbReference type="EMBL" id="AF127656">
    <property type="protein sequence ID" value="AAF65920.1"/>
    <property type="molecule type" value="mRNA"/>
</dbReference>
<dbReference type="EMBL" id="AF127658">
    <property type="protein sequence ID" value="AAF65921.1"/>
    <property type="molecule type" value="mRNA"/>
</dbReference>
<dbReference type="EMBL" id="AF127659">
    <property type="protein sequence ID" value="AAF65922.1"/>
    <property type="molecule type" value="mRNA"/>
</dbReference>
<dbReference type="EMBL" id="AF127660">
    <property type="protein sequence ID" value="AAF65923.1"/>
    <property type="molecule type" value="mRNA"/>
</dbReference>
<dbReference type="EMBL" id="AF127662">
    <property type="protein sequence ID" value="AAF65924.1"/>
    <property type="molecule type" value="mRNA"/>
</dbReference>
<dbReference type="EMBL" id="AK002625">
    <property type="protein sequence ID" value="BAB22240.1"/>
    <property type="molecule type" value="mRNA"/>
</dbReference>
<dbReference type="CCDS" id="CCDS36933.1">
    <molecule id="Q9JHK4-1"/>
</dbReference>
<dbReference type="RefSeq" id="NP_001347316.1">
    <molecule id="Q9JHK4-1"/>
    <property type="nucleotide sequence ID" value="NM_001360387.1"/>
</dbReference>
<dbReference type="RefSeq" id="NP_001347317.1">
    <molecule id="Q9JHK4-1"/>
    <property type="nucleotide sequence ID" value="NM_001360388.1"/>
</dbReference>
<dbReference type="RefSeq" id="NP_062392.1">
    <molecule id="Q9JHK4-1"/>
    <property type="nucleotide sequence ID" value="NM_019519.3"/>
</dbReference>
<dbReference type="RefSeq" id="XP_006519357.1">
    <property type="nucleotide sequence ID" value="XM_006519294.2"/>
</dbReference>
<dbReference type="RefSeq" id="XP_006519358.1">
    <property type="nucleotide sequence ID" value="XM_006519295.1"/>
</dbReference>
<dbReference type="SMR" id="Q9JHK4"/>
<dbReference type="BioGRID" id="207827">
    <property type="interactions" value="9"/>
</dbReference>
<dbReference type="ComplexPortal" id="CPX-2920">
    <property type="entry name" value="Protein geranylgeranyltransferase type II complex"/>
</dbReference>
<dbReference type="FunCoup" id="Q9JHK4">
    <property type="interactions" value="1578"/>
</dbReference>
<dbReference type="IntAct" id="Q9JHK4">
    <property type="interactions" value="1"/>
</dbReference>
<dbReference type="STRING" id="10090.ENSMUSP00000154725"/>
<dbReference type="iPTMnet" id="Q9JHK4"/>
<dbReference type="PhosphoSitePlus" id="Q9JHK4"/>
<dbReference type="SwissPalm" id="Q9JHK4"/>
<dbReference type="jPOST" id="Q9JHK4"/>
<dbReference type="PaxDb" id="10090-ENSMUSP00000133032"/>
<dbReference type="PeptideAtlas" id="Q9JHK4"/>
<dbReference type="ProteomicsDB" id="289481">
    <molecule id="Q9JHK4-1"/>
</dbReference>
<dbReference type="ProteomicsDB" id="289482">
    <molecule id="Q9JHK4-2"/>
</dbReference>
<dbReference type="Pumba" id="Q9JHK4"/>
<dbReference type="Antibodypedia" id="22812">
    <property type="antibodies" value="82 antibodies from 23 providers"/>
</dbReference>
<dbReference type="DNASU" id="56187"/>
<dbReference type="Ensembl" id="ENSMUST00000163889.3">
    <molecule id="Q9JHK4-1"/>
    <property type="protein sequence ID" value="ENSMUSP00000128668.2"/>
    <property type="gene ID" value="ENSMUSG00000040472.16"/>
</dbReference>
<dbReference type="Ensembl" id="ENSMUST00000169237.8">
    <molecule id="Q9JHK4-1"/>
    <property type="protein sequence ID" value="ENSMUSP00000133032.2"/>
    <property type="gene ID" value="ENSMUSG00000040472.16"/>
</dbReference>
<dbReference type="Ensembl" id="ENSMUST00000227061.2">
    <molecule id="Q9JHK4-1"/>
    <property type="protein sequence ID" value="ENSMUSP00000154725.2"/>
    <property type="gene ID" value="ENSMUSG00000040472.16"/>
</dbReference>
<dbReference type="GeneID" id="56187"/>
<dbReference type="KEGG" id="mmu:56187"/>
<dbReference type="UCSC" id="uc007uai.1">
    <molecule id="Q9JHK4-1"/>
    <property type="organism name" value="mouse"/>
</dbReference>
<dbReference type="AGR" id="MGI:1860443"/>
<dbReference type="CTD" id="5875"/>
<dbReference type="MGI" id="MGI:1860443">
    <property type="gene designation" value="Rabggta"/>
</dbReference>
<dbReference type="VEuPathDB" id="HostDB:ENSMUSG00000040472"/>
<dbReference type="eggNOG" id="KOG0529">
    <property type="taxonomic scope" value="Eukaryota"/>
</dbReference>
<dbReference type="GeneTree" id="ENSGT00550000075121"/>
<dbReference type="HOGENOM" id="CLU_031996_3_2_1"/>
<dbReference type="InParanoid" id="Q9JHK4"/>
<dbReference type="OMA" id="CAWHHRC"/>
<dbReference type="OrthoDB" id="1658at2759"/>
<dbReference type="PhylomeDB" id="Q9JHK4"/>
<dbReference type="TreeFam" id="TF315057"/>
<dbReference type="Reactome" id="R-MMU-6803205">
    <property type="pathway name" value="TP53 regulates transcription of several additional cell death genes whose specific roles in p53-dependent apoptosis remain uncertain"/>
</dbReference>
<dbReference type="Reactome" id="R-MMU-8873719">
    <property type="pathway name" value="RAB geranylgeranylation"/>
</dbReference>
<dbReference type="BioGRID-ORCS" id="56187">
    <property type="hits" value="29 hits in 81 CRISPR screens"/>
</dbReference>
<dbReference type="ChiTaRS" id="Rabggta">
    <property type="organism name" value="mouse"/>
</dbReference>
<dbReference type="PRO" id="PR:Q9JHK4"/>
<dbReference type="Proteomes" id="UP000000589">
    <property type="component" value="Chromosome 14"/>
</dbReference>
<dbReference type="RNAct" id="Q9JHK4">
    <property type="molecule type" value="protein"/>
</dbReference>
<dbReference type="Bgee" id="ENSMUSG00000040472">
    <property type="expression patterns" value="Expressed in ectoplacental cone and 251 other cell types or tissues"/>
</dbReference>
<dbReference type="ExpressionAtlas" id="Q9JHK4">
    <property type="expression patterns" value="baseline and differential"/>
</dbReference>
<dbReference type="GO" id="GO:0005968">
    <property type="term" value="C:Rab-protein geranylgeranyltransferase complex"/>
    <property type="evidence" value="ECO:0000250"/>
    <property type="project" value="UniProtKB"/>
</dbReference>
<dbReference type="GO" id="GO:0004663">
    <property type="term" value="F:Rab geranylgeranyltransferase activity"/>
    <property type="evidence" value="ECO:0000315"/>
    <property type="project" value="MGI"/>
</dbReference>
<dbReference type="GO" id="GO:0031267">
    <property type="term" value="F:small GTPase binding"/>
    <property type="evidence" value="ECO:0000250"/>
    <property type="project" value="UniProtKB"/>
</dbReference>
<dbReference type="GO" id="GO:0008270">
    <property type="term" value="F:zinc ion binding"/>
    <property type="evidence" value="ECO:0007669"/>
    <property type="project" value="InterPro"/>
</dbReference>
<dbReference type="FunFam" id="1.25.40.120:FF:000035">
    <property type="entry name" value="Geranylgeranyl transferase type-2 subunit alpha"/>
    <property type="match status" value="2"/>
</dbReference>
<dbReference type="FunFam" id="2.60.40.1130:FF:000001">
    <property type="entry name" value="Geranylgeranyl transferase type-2 subunit alpha"/>
    <property type="match status" value="1"/>
</dbReference>
<dbReference type="FunFam" id="3.80.10.10:FF:000138">
    <property type="entry name" value="geranylgeranyl transferase type-2 subunit alpha"/>
    <property type="match status" value="1"/>
</dbReference>
<dbReference type="Gene3D" id="1.25.40.120">
    <property type="entry name" value="Protein prenylyltransferase"/>
    <property type="match status" value="1"/>
</dbReference>
<dbReference type="Gene3D" id="2.60.40.1130">
    <property type="entry name" value="Rab geranylgeranyltransferase alpha-subunit, insert domain"/>
    <property type="match status" value="1"/>
</dbReference>
<dbReference type="Gene3D" id="3.80.10.10">
    <property type="entry name" value="Ribonuclease Inhibitor"/>
    <property type="match status" value="1"/>
</dbReference>
<dbReference type="InterPro" id="IPR032675">
    <property type="entry name" value="LRR_dom_sf"/>
</dbReference>
<dbReference type="InterPro" id="IPR002088">
    <property type="entry name" value="Prenyl_trans_a"/>
</dbReference>
<dbReference type="InterPro" id="IPR036254">
    <property type="entry name" value="RabGGT_asu_insert-dom_sf"/>
</dbReference>
<dbReference type="InterPro" id="IPR009087">
    <property type="entry name" value="RabGGT_asu_insert-domain"/>
</dbReference>
<dbReference type="PANTHER" id="PTHR11129:SF2">
    <property type="entry name" value="GERANYLGERANYL TRANSFERASE TYPE-2 SUBUNIT ALPHA"/>
    <property type="match status" value="1"/>
</dbReference>
<dbReference type="PANTHER" id="PTHR11129">
    <property type="entry name" value="PROTEIN FARNESYLTRANSFERASE ALPHA SUBUNIT/RAB GERANYLGERANYL TRANSFERASE ALPHA SUBUNIT"/>
    <property type="match status" value="1"/>
</dbReference>
<dbReference type="Pfam" id="PF01239">
    <property type="entry name" value="PPTA"/>
    <property type="match status" value="5"/>
</dbReference>
<dbReference type="Pfam" id="PF07711">
    <property type="entry name" value="RabGGT_insert"/>
    <property type="match status" value="1"/>
</dbReference>
<dbReference type="SUPFAM" id="SSF52075">
    <property type="entry name" value="Outer arm dynein light chain 1"/>
    <property type="match status" value="1"/>
</dbReference>
<dbReference type="SUPFAM" id="SSF48439">
    <property type="entry name" value="Protein prenylyltransferase"/>
    <property type="match status" value="1"/>
</dbReference>
<dbReference type="SUPFAM" id="SSF49594">
    <property type="entry name" value="Rab geranylgeranyltransferase alpha-subunit, insert domain"/>
    <property type="match status" value="1"/>
</dbReference>
<dbReference type="PROSITE" id="PS51147">
    <property type="entry name" value="PFTA"/>
    <property type="match status" value="6"/>
</dbReference>
<sequence length="567" mass="64989">MHGRLKVKTSEEQAEAKRLEREQKLKLYQSATQAVFQKREAGELDESVLELTSQILGANPDFATLWNCRREVLQQLETQKSPEELAALVKAELGFLESCLRVNPKSYGTWHHRCWLLSRLPEPNWARELELCARFLEADERNFHCWDYRRFVAAQAAVAPAEELAFTDSLITRNFSNYSSWHYRSCLLPQLHPQPDSGPQGRLPENVLLRELELVQNAFFTDPNDQSAWFYHRWLLGRAEPHDVLCCLHVSREEACLSVCFSRPLIVGSKMGTLLLTVDEAPLSVEWRTPDGRNRPSHVWLCDLPAASLNDHLPQHTFRVIWTGSDTQKECVLLKGHQECWCRDSATDEQLFRCELSVEKSTVLQSELESCKELQELEPENKWCLLTIILLMRALDPLLYEKETLEYFSTLKAVDPMRAAYLDDLRSKFLVENSVLKMEYADVRVLHLAHKDLTVLCHLEQLLLVTHLDLSHNRLRALPPALAALRCLEVLQASDNVLENLDGVANLPRLRELLLCNNRLQQSAALQTLASCPRLVFLNLQGNSLCQEEGIRERLAEMLPSVSSILT</sequence>
<organism>
    <name type="scientific">Mus musculus</name>
    <name type="common">Mouse</name>
    <dbReference type="NCBI Taxonomy" id="10090"/>
    <lineage>
        <taxon>Eukaryota</taxon>
        <taxon>Metazoa</taxon>
        <taxon>Chordata</taxon>
        <taxon>Craniata</taxon>
        <taxon>Vertebrata</taxon>
        <taxon>Euteleostomi</taxon>
        <taxon>Mammalia</taxon>
        <taxon>Eutheria</taxon>
        <taxon>Euarchontoglires</taxon>
        <taxon>Glires</taxon>
        <taxon>Rodentia</taxon>
        <taxon>Myomorpha</taxon>
        <taxon>Muroidea</taxon>
        <taxon>Muridae</taxon>
        <taxon>Murinae</taxon>
        <taxon>Mus</taxon>
        <taxon>Mus</taxon>
    </lineage>
</organism>
<proteinExistence type="evidence at protein level"/>
<keyword id="KW-0025">Alternative splicing</keyword>
<keyword id="KW-0433">Leucine-rich repeat</keyword>
<keyword id="KW-0597">Phosphoprotein</keyword>
<keyword id="KW-0637">Prenyltransferase</keyword>
<keyword id="KW-1185">Reference proteome</keyword>
<keyword id="KW-0677">Repeat</keyword>
<keyword id="KW-0808">Transferase</keyword>